<dbReference type="EMBL" id="CP000970">
    <property type="protein sequence ID" value="ACB18606.1"/>
    <property type="molecule type" value="Genomic_DNA"/>
</dbReference>
<dbReference type="RefSeq" id="WP_000109295.1">
    <property type="nucleotide sequence ID" value="NC_010498.1"/>
</dbReference>
<dbReference type="SMR" id="B1LJW4"/>
<dbReference type="KEGG" id="ecm:EcSMS35_2221"/>
<dbReference type="HOGENOM" id="CLU_035018_1_2_6"/>
<dbReference type="Proteomes" id="UP000007011">
    <property type="component" value="Chromosome"/>
</dbReference>
<dbReference type="GO" id="GO:0005886">
    <property type="term" value="C:plasma membrane"/>
    <property type="evidence" value="ECO:0007669"/>
    <property type="project" value="UniProtKB-SubCell"/>
</dbReference>
<dbReference type="GO" id="GO:0022857">
    <property type="term" value="F:transmembrane transporter activity"/>
    <property type="evidence" value="ECO:0007669"/>
    <property type="project" value="UniProtKB-UniRule"/>
</dbReference>
<dbReference type="CDD" id="cd17477">
    <property type="entry name" value="MFS_YcaD_like"/>
    <property type="match status" value="1"/>
</dbReference>
<dbReference type="FunFam" id="1.20.1250.20:FF:000041">
    <property type="entry name" value="Uncharacterized MFS-type transporter YcaD"/>
    <property type="match status" value="1"/>
</dbReference>
<dbReference type="FunFam" id="1.20.1250.20:FF:000066">
    <property type="entry name" value="Uncharacterized MFS-type transporter YcaD"/>
    <property type="match status" value="1"/>
</dbReference>
<dbReference type="Gene3D" id="1.20.1250.20">
    <property type="entry name" value="MFS general substrate transporter like domains"/>
    <property type="match status" value="2"/>
</dbReference>
<dbReference type="HAMAP" id="MF_01149">
    <property type="entry name" value="MFS_YcaD"/>
    <property type="match status" value="1"/>
</dbReference>
<dbReference type="InterPro" id="IPR011701">
    <property type="entry name" value="MFS"/>
</dbReference>
<dbReference type="InterPro" id="IPR020846">
    <property type="entry name" value="MFS_dom"/>
</dbReference>
<dbReference type="InterPro" id="IPR036259">
    <property type="entry name" value="MFS_trans_sf"/>
</dbReference>
<dbReference type="InterPro" id="IPR023745">
    <property type="entry name" value="MFS_YcaD"/>
</dbReference>
<dbReference type="InterPro" id="IPR047200">
    <property type="entry name" value="MFS_YcaD-like"/>
</dbReference>
<dbReference type="NCBIfam" id="NF002962">
    <property type="entry name" value="PRK03633.1"/>
    <property type="match status" value="1"/>
</dbReference>
<dbReference type="PANTHER" id="PTHR23521">
    <property type="entry name" value="TRANSPORTER MFS SUPERFAMILY"/>
    <property type="match status" value="1"/>
</dbReference>
<dbReference type="PANTHER" id="PTHR23521:SF2">
    <property type="entry name" value="TRANSPORTER MFS SUPERFAMILY"/>
    <property type="match status" value="1"/>
</dbReference>
<dbReference type="Pfam" id="PF07690">
    <property type="entry name" value="MFS_1"/>
    <property type="match status" value="1"/>
</dbReference>
<dbReference type="SUPFAM" id="SSF103473">
    <property type="entry name" value="MFS general substrate transporter"/>
    <property type="match status" value="1"/>
</dbReference>
<dbReference type="PROSITE" id="PS50850">
    <property type="entry name" value="MFS"/>
    <property type="match status" value="1"/>
</dbReference>
<protein>
    <recommendedName>
        <fullName evidence="1">Uncharacterized MFS-type transporter YcaD</fullName>
    </recommendedName>
</protein>
<gene>
    <name evidence="1" type="primary">ycaD</name>
    <name type="ordered locus">EcSMS35_2221</name>
</gene>
<keyword id="KW-0997">Cell inner membrane</keyword>
<keyword id="KW-1003">Cell membrane</keyword>
<keyword id="KW-0472">Membrane</keyword>
<keyword id="KW-0812">Transmembrane</keyword>
<keyword id="KW-1133">Transmembrane helix</keyword>
<keyword id="KW-0813">Transport</keyword>
<accession>B1LJW4</accession>
<name>YCAD_ECOSM</name>
<organism>
    <name type="scientific">Escherichia coli (strain SMS-3-5 / SECEC)</name>
    <dbReference type="NCBI Taxonomy" id="439855"/>
    <lineage>
        <taxon>Bacteria</taxon>
        <taxon>Pseudomonadati</taxon>
        <taxon>Pseudomonadota</taxon>
        <taxon>Gammaproteobacteria</taxon>
        <taxon>Enterobacterales</taxon>
        <taxon>Enterobacteriaceae</taxon>
        <taxon>Escherichia</taxon>
    </lineage>
</organism>
<feature type="chain" id="PRO_1000137490" description="Uncharacterized MFS-type transporter YcaD">
    <location>
        <begin position="1"/>
        <end position="382"/>
    </location>
</feature>
<feature type="transmembrane region" description="Helical" evidence="1">
    <location>
        <begin position="14"/>
        <end position="34"/>
    </location>
</feature>
<feature type="transmembrane region" description="Helical" evidence="1">
    <location>
        <begin position="45"/>
        <end position="65"/>
    </location>
</feature>
<feature type="transmembrane region" description="Helical" evidence="1">
    <location>
        <begin position="79"/>
        <end position="99"/>
    </location>
</feature>
<feature type="transmembrane region" description="Helical" evidence="1">
    <location>
        <begin position="102"/>
        <end position="122"/>
    </location>
</feature>
<feature type="transmembrane region" description="Helical" evidence="1">
    <location>
        <begin position="131"/>
        <end position="151"/>
    </location>
</feature>
<feature type="transmembrane region" description="Helical" evidence="1">
    <location>
        <begin position="157"/>
        <end position="177"/>
    </location>
</feature>
<feature type="transmembrane region" description="Helical" evidence="1">
    <location>
        <begin position="204"/>
        <end position="224"/>
    </location>
</feature>
<feature type="transmembrane region" description="Helical" evidence="1">
    <location>
        <begin position="235"/>
        <end position="255"/>
    </location>
</feature>
<feature type="transmembrane region" description="Helical" evidence="1">
    <location>
        <begin position="270"/>
        <end position="290"/>
    </location>
</feature>
<feature type="transmembrane region" description="Helical" evidence="1">
    <location>
        <begin position="291"/>
        <end position="311"/>
    </location>
</feature>
<feature type="transmembrane region" description="Helical" evidence="1">
    <location>
        <begin position="325"/>
        <end position="345"/>
    </location>
</feature>
<feature type="transmembrane region" description="Helical" evidence="1">
    <location>
        <begin position="348"/>
        <end position="368"/>
    </location>
</feature>
<sequence>MSTYTRPVMLLLSGLLLLTLAIAVLNTLVPLWLAQEHMSTWQVGVVSSSYFTGNLVGTLLTGYVIKRIGFNRSYYLASFIFAAGCAGLGLMIGFWSWLAWRFVAGVGCAMIWVVVESALMCSGTSRNRGRLLAAYMMVYYVGTFLGQLLVSKVSTELMSVLPWVTGLTLAGILPLLFTRVLNQQAENHDSTSITSMLKLRQARLGVNGCIISGIVLGSLYGLMPLYLNHKGVSNASIGFWMAVLVSAGILGQWPIGRLADKFGRLLVLRVQVFVVILGSIAMLSQAAMAPALFILGAAGFTLYPVAMAWACEKVEHHQLVAMNQALLLSYTVGSLLGPSFTAMLMQNFSDNLLFIMIASVSFIYLLMLLRNAGHTPKPVAHV</sequence>
<comment type="subcellular location">
    <subcellularLocation>
        <location evidence="1">Cell inner membrane</location>
        <topology evidence="1">Multi-pass membrane protein</topology>
    </subcellularLocation>
</comment>
<comment type="similarity">
    <text evidence="1">Belongs to the major facilitator superfamily. YcaD (TC 2.A.1.26) family.</text>
</comment>
<evidence type="ECO:0000255" key="1">
    <source>
        <dbReference type="HAMAP-Rule" id="MF_01149"/>
    </source>
</evidence>
<proteinExistence type="inferred from homology"/>
<reference key="1">
    <citation type="journal article" date="2008" name="J. Bacteriol.">
        <title>Insights into the environmental resistance gene pool from the genome sequence of the multidrug-resistant environmental isolate Escherichia coli SMS-3-5.</title>
        <authorList>
            <person name="Fricke W.F."/>
            <person name="Wright M.S."/>
            <person name="Lindell A.H."/>
            <person name="Harkins D.M."/>
            <person name="Baker-Austin C."/>
            <person name="Ravel J."/>
            <person name="Stepanauskas R."/>
        </authorList>
    </citation>
    <scope>NUCLEOTIDE SEQUENCE [LARGE SCALE GENOMIC DNA]</scope>
    <source>
        <strain>SMS-3-5 / SECEC</strain>
    </source>
</reference>